<evidence type="ECO:0000250" key="1"/>
<evidence type="ECO:0000255" key="2">
    <source>
        <dbReference type="HAMAP-Rule" id="MF_01344"/>
    </source>
</evidence>
<accession>P19586</accession>
<accession>Q1KVS3</accession>
<name>PETD_TETOB</name>
<comment type="function">
    <text evidence="2">Component of the cytochrome b6-f complex, which mediates electron transfer between photosystem II (PSII) and photosystem I (PSI), cyclic electron flow around PSI, and state transitions.</text>
</comment>
<comment type="subunit">
    <text evidence="1">The 4 large subunits of the cytochrome b6-f complex are cytochrome b6, subunit IV (17 kDa polypeptide, petD), cytochrome f and the Rieske protein, while the 4 small subunits are petG, petL, petM and petN. The complex functions as a dimer (By similarity).</text>
</comment>
<comment type="subcellular location">
    <subcellularLocation>
        <location evidence="2">Plastid</location>
        <location evidence="2">Chloroplast thylakoid membrane</location>
        <topology evidence="2">Multi-pass membrane protein</topology>
    </subcellularLocation>
</comment>
<comment type="similarity">
    <text evidence="2">Belongs to the cytochrome b family. PetD subfamily.</text>
</comment>
<sequence length="160" mass="17541">MSVTKKPDLTDPVLKEKLAKGMGHNYYGEPAWPNDLLYIFPVVILGTFACVIGLSVLDPAAIGEPANPFATPLEILPEWYFYPVFQLLRTVPNKLLGVLLMAAVPAGLITVPFIENINKFQNPYRRPIATTLFLVGTLVAVWLGIGATLPIEISLTFGLF</sequence>
<geneLocation type="chloroplast"/>
<dbReference type="EMBL" id="DQ396875">
    <property type="protein sequence ID" value="ABD48284.1"/>
    <property type="molecule type" value="Genomic_DNA"/>
</dbReference>
<dbReference type="RefSeq" id="YP_636001.1">
    <property type="nucleotide sequence ID" value="NC_008101.1"/>
</dbReference>
<dbReference type="SMR" id="P19586"/>
<dbReference type="GeneID" id="4099775"/>
<dbReference type="GO" id="GO:0009535">
    <property type="term" value="C:chloroplast thylakoid membrane"/>
    <property type="evidence" value="ECO:0007669"/>
    <property type="project" value="UniProtKB-SubCell"/>
</dbReference>
<dbReference type="GO" id="GO:0005739">
    <property type="term" value="C:mitochondrion"/>
    <property type="evidence" value="ECO:0007669"/>
    <property type="project" value="GOC"/>
</dbReference>
<dbReference type="GO" id="GO:0045158">
    <property type="term" value="F:electron transporter, transferring electrons within cytochrome b6/f complex of photosystem II activity"/>
    <property type="evidence" value="ECO:0007669"/>
    <property type="project" value="UniProtKB-UniRule"/>
</dbReference>
<dbReference type="GO" id="GO:0045156">
    <property type="term" value="F:electron transporter, transferring electrons within the cyclic electron transport pathway of photosynthesis activity"/>
    <property type="evidence" value="ECO:0007669"/>
    <property type="project" value="InterPro"/>
</dbReference>
<dbReference type="GO" id="GO:0008121">
    <property type="term" value="F:ubiquinol-cytochrome-c reductase activity"/>
    <property type="evidence" value="ECO:0007669"/>
    <property type="project" value="TreeGrafter"/>
</dbReference>
<dbReference type="GO" id="GO:0006122">
    <property type="term" value="P:mitochondrial electron transport, ubiquinol to cytochrome c"/>
    <property type="evidence" value="ECO:0007669"/>
    <property type="project" value="TreeGrafter"/>
</dbReference>
<dbReference type="GO" id="GO:0009767">
    <property type="term" value="P:photosynthetic electron transport chain"/>
    <property type="evidence" value="ECO:0007669"/>
    <property type="project" value="InterPro"/>
</dbReference>
<dbReference type="CDD" id="cd00290">
    <property type="entry name" value="cytochrome_b_C"/>
    <property type="match status" value="1"/>
</dbReference>
<dbReference type="FunFam" id="1.10.287.980:FF:000001">
    <property type="entry name" value="Cytochrome b6-f complex subunit 4"/>
    <property type="match status" value="1"/>
</dbReference>
<dbReference type="FunFam" id="1.20.5.510:FF:000002">
    <property type="entry name" value="Cytochrome b6-f complex subunit 4"/>
    <property type="match status" value="1"/>
</dbReference>
<dbReference type="Gene3D" id="1.10.287.980">
    <property type="entry name" value="plastocyanin oxidoreductase"/>
    <property type="match status" value="1"/>
</dbReference>
<dbReference type="Gene3D" id="1.20.5.510">
    <property type="entry name" value="Single helix bin"/>
    <property type="match status" value="1"/>
</dbReference>
<dbReference type="HAMAP" id="MF_01344">
    <property type="entry name" value="Cytb6_f_subIV"/>
    <property type="match status" value="1"/>
</dbReference>
<dbReference type="InterPro" id="IPR005798">
    <property type="entry name" value="Cyt_b/b6_C"/>
</dbReference>
<dbReference type="InterPro" id="IPR036150">
    <property type="entry name" value="Cyt_b/b6_C_sf"/>
</dbReference>
<dbReference type="InterPro" id="IPR005870">
    <property type="entry name" value="Cyt_b6/f_cplx_suIV"/>
</dbReference>
<dbReference type="InterPro" id="IPR048260">
    <property type="entry name" value="Cytochrome_b_C_euk/bac"/>
</dbReference>
<dbReference type="NCBIfam" id="TIGR01156">
    <property type="entry name" value="cytb6_f_IV"/>
    <property type="match status" value="1"/>
</dbReference>
<dbReference type="PANTHER" id="PTHR19271">
    <property type="entry name" value="CYTOCHROME B"/>
    <property type="match status" value="1"/>
</dbReference>
<dbReference type="PANTHER" id="PTHR19271:SF41">
    <property type="entry name" value="CYTOCHROME B_B6 C-TERMINAL REGION PROFILE DOMAIN-CONTAINING PROTEIN"/>
    <property type="match status" value="1"/>
</dbReference>
<dbReference type="Pfam" id="PF00032">
    <property type="entry name" value="Cytochrom_B_C"/>
    <property type="match status" value="1"/>
</dbReference>
<dbReference type="PIRSF" id="PIRSF000033">
    <property type="entry name" value="B6f_17K"/>
    <property type="match status" value="1"/>
</dbReference>
<dbReference type="SUPFAM" id="SSF81648">
    <property type="entry name" value="a domain/subunit of cytochrome bc1 complex (Ubiquinol-cytochrome c reductase)"/>
    <property type="match status" value="1"/>
</dbReference>
<dbReference type="PROSITE" id="PS51003">
    <property type="entry name" value="CYTB_CTER"/>
    <property type="match status" value="1"/>
</dbReference>
<protein>
    <recommendedName>
        <fullName evidence="2">Cytochrome b6-f complex subunit 4</fullName>
    </recommendedName>
    <alternativeName>
        <fullName evidence="2">17 kDa polypeptide</fullName>
    </alternativeName>
</protein>
<feature type="chain" id="PRO_0000061890" description="Cytochrome b6-f complex subunit 4">
    <location>
        <begin position="1"/>
        <end position="160"/>
    </location>
</feature>
<feature type="transmembrane region" description="Helical" evidence="2">
    <location>
        <begin position="36"/>
        <end position="56"/>
    </location>
</feature>
<feature type="transmembrane region" description="Helical" evidence="2">
    <location>
        <begin position="95"/>
        <end position="115"/>
    </location>
</feature>
<feature type="transmembrane region" description="Helical" evidence="2">
    <location>
        <begin position="131"/>
        <end position="151"/>
    </location>
</feature>
<feature type="sequence variant" description="In strain: KS3/2.">
    <original>L</original>
    <variation>F</variation>
    <location>
        <position position="18"/>
    </location>
</feature>
<gene>
    <name evidence="2" type="primary">petD</name>
</gene>
<organism>
    <name type="scientific">Tetradesmus obliquus</name>
    <name type="common">Green alga</name>
    <name type="synonym">Acutodesmus obliquus</name>
    <dbReference type="NCBI Taxonomy" id="3088"/>
    <lineage>
        <taxon>Eukaryota</taxon>
        <taxon>Viridiplantae</taxon>
        <taxon>Chlorophyta</taxon>
        <taxon>core chlorophytes</taxon>
        <taxon>Chlorophyceae</taxon>
        <taxon>CS clade</taxon>
        <taxon>Sphaeropleales</taxon>
        <taxon>Scenedesmaceae</taxon>
        <taxon>Tetradesmus</taxon>
    </lineage>
</organism>
<keyword id="KW-0150">Chloroplast</keyword>
<keyword id="KW-0249">Electron transport</keyword>
<keyword id="KW-0472">Membrane</keyword>
<keyword id="KW-0602">Photosynthesis</keyword>
<keyword id="KW-0934">Plastid</keyword>
<keyword id="KW-0793">Thylakoid</keyword>
<keyword id="KW-0812">Transmembrane</keyword>
<keyword id="KW-1133">Transmembrane helix</keyword>
<keyword id="KW-0813">Transport</keyword>
<proteinExistence type="inferred from homology"/>
<reference key="1">
    <citation type="journal article" date="1989" name="Mol. Gen. Genet.">
        <title>The intron of a plastid gene from a green alga contains an open reading frame for a reverse transcriptase-like enzyme.</title>
        <authorList>
            <person name="Kueck U."/>
        </authorList>
    </citation>
    <scope>NUCLEOTIDE SEQUENCE [GENOMIC DNA]</scope>
    <source>
        <strain>KS3/2</strain>
    </source>
</reference>
<reference key="2">
    <citation type="journal article" date="1997" name="Nucleic Acids Res.">
        <title>Evolutionarily conserved and functionally important residues in the I-CeuI homing endonuclease.</title>
        <authorList>
            <person name="Turmel M."/>
            <person name="Otis C."/>
            <person name="Cote V."/>
            <person name="Lemieux C."/>
        </authorList>
    </citation>
    <scope>NUCLEOTIDE SEQUENCE [GENOMIC DNA]</scope>
    <source>
        <strain>UTEX 393</strain>
    </source>
</reference>
<reference key="3">
    <citation type="journal article" date="2006" name="BMC Evol. Biol.">
        <title>The complete chloroplast genome sequence of the chlorophycean green alga Scenedesmus obliquus reveals a compact gene organization and a biased distribution of genes on the two DNA strands.</title>
        <authorList>
            <person name="de Cambiaire J.-C."/>
            <person name="Otis C."/>
            <person name="Lemieux C."/>
            <person name="Turmel M."/>
        </authorList>
    </citation>
    <scope>NUCLEOTIDE SEQUENCE [LARGE SCALE GENOMIC DNA]</scope>
    <source>
        <strain>UTEX 393</strain>
    </source>
</reference>